<feature type="chain" id="PRO_1000021223" description="Recombination-associated protein RdgC">
    <location>
        <begin position="1"/>
        <end position="306"/>
    </location>
</feature>
<accession>Q4ZW36</accession>
<gene>
    <name evidence="1" type="primary">rdgC</name>
    <name type="ordered locus">Psyr_1588</name>
</gene>
<evidence type="ECO:0000255" key="1">
    <source>
        <dbReference type="HAMAP-Rule" id="MF_00194"/>
    </source>
</evidence>
<keyword id="KW-0963">Cytoplasm</keyword>
<keyword id="KW-0233">DNA recombination</keyword>
<reference key="1">
    <citation type="journal article" date="2005" name="Proc. Natl. Acad. Sci. U.S.A.">
        <title>Comparison of the complete genome sequences of Pseudomonas syringae pv. syringae B728a and pv. tomato DC3000.</title>
        <authorList>
            <person name="Feil H."/>
            <person name="Feil W.S."/>
            <person name="Chain P."/>
            <person name="Larimer F."/>
            <person name="Dibartolo G."/>
            <person name="Copeland A."/>
            <person name="Lykidis A."/>
            <person name="Trong S."/>
            <person name="Nolan M."/>
            <person name="Goltsman E."/>
            <person name="Thiel J."/>
            <person name="Malfatti S."/>
            <person name="Loper J.E."/>
            <person name="Lapidus A."/>
            <person name="Detter J.C."/>
            <person name="Land M."/>
            <person name="Richardson P.M."/>
            <person name="Kyrpides N.C."/>
            <person name="Ivanova N."/>
            <person name="Lindow S.E."/>
        </authorList>
    </citation>
    <scope>NUCLEOTIDE SEQUENCE [LARGE SCALE GENOMIC DNA]</scope>
    <source>
        <strain>B728a</strain>
    </source>
</reference>
<comment type="function">
    <text evidence="1">May be involved in recombination.</text>
</comment>
<comment type="subcellular location">
    <subcellularLocation>
        <location evidence="1">Cytoplasm</location>
        <location evidence="1">Nucleoid</location>
    </subcellularLocation>
</comment>
<comment type="similarity">
    <text evidence="1">Belongs to the RdgC family.</text>
</comment>
<protein>
    <recommendedName>
        <fullName evidence="1">Recombination-associated protein RdgC</fullName>
    </recommendedName>
</protein>
<dbReference type="EMBL" id="CP000075">
    <property type="protein sequence ID" value="AAY36636.1"/>
    <property type="molecule type" value="Genomic_DNA"/>
</dbReference>
<dbReference type="RefSeq" id="WP_003317427.1">
    <property type="nucleotide sequence ID" value="NC_007005.1"/>
</dbReference>
<dbReference type="RefSeq" id="YP_234674.1">
    <property type="nucleotide sequence ID" value="NC_007005.1"/>
</dbReference>
<dbReference type="SMR" id="Q4ZW36"/>
<dbReference type="STRING" id="205918.Psyr_1588"/>
<dbReference type="GeneID" id="77277428"/>
<dbReference type="KEGG" id="psb:Psyr_1588"/>
<dbReference type="PATRIC" id="fig|205918.7.peg.1622"/>
<dbReference type="eggNOG" id="COG2974">
    <property type="taxonomic scope" value="Bacteria"/>
</dbReference>
<dbReference type="HOGENOM" id="CLU_052038_1_1_6"/>
<dbReference type="OrthoDB" id="5290530at2"/>
<dbReference type="Proteomes" id="UP000000426">
    <property type="component" value="Chromosome"/>
</dbReference>
<dbReference type="GO" id="GO:0043590">
    <property type="term" value="C:bacterial nucleoid"/>
    <property type="evidence" value="ECO:0007669"/>
    <property type="project" value="TreeGrafter"/>
</dbReference>
<dbReference type="GO" id="GO:0005737">
    <property type="term" value="C:cytoplasm"/>
    <property type="evidence" value="ECO:0007669"/>
    <property type="project" value="UniProtKB-UniRule"/>
</dbReference>
<dbReference type="GO" id="GO:0003690">
    <property type="term" value="F:double-stranded DNA binding"/>
    <property type="evidence" value="ECO:0007669"/>
    <property type="project" value="TreeGrafter"/>
</dbReference>
<dbReference type="GO" id="GO:0006310">
    <property type="term" value="P:DNA recombination"/>
    <property type="evidence" value="ECO:0007669"/>
    <property type="project" value="UniProtKB-UniRule"/>
</dbReference>
<dbReference type="GO" id="GO:0000018">
    <property type="term" value="P:regulation of DNA recombination"/>
    <property type="evidence" value="ECO:0007669"/>
    <property type="project" value="TreeGrafter"/>
</dbReference>
<dbReference type="HAMAP" id="MF_00194">
    <property type="entry name" value="RdgC"/>
    <property type="match status" value="1"/>
</dbReference>
<dbReference type="InterPro" id="IPR007476">
    <property type="entry name" value="RdgC"/>
</dbReference>
<dbReference type="NCBIfam" id="NF001461">
    <property type="entry name" value="PRK00321.1-2"/>
    <property type="match status" value="1"/>
</dbReference>
<dbReference type="NCBIfam" id="NF001462">
    <property type="entry name" value="PRK00321.1-3"/>
    <property type="match status" value="1"/>
</dbReference>
<dbReference type="NCBIfam" id="NF001464">
    <property type="entry name" value="PRK00321.1-5"/>
    <property type="match status" value="1"/>
</dbReference>
<dbReference type="PANTHER" id="PTHR38103">
    <property type="entry name" value="RECOMBINATION-ASSOCIATED PROTEIN RDGC"/>
    <property type="match status" value="1"/>
</dbReference>
<dbReference type="PANTHER" id="PTHR38103:SF1">
    <property type="entry name" value="RECOMBINATION-ASSOCIATED PROTEIN RDGC"/>
    <property type="match status" value="1"/>
</dbReference>
<dbReference type="Pfam" id="PF04381">
    <property type="entry name" value="RdgC"/>
    <property type="match status" value="1"/>
</dbReference>
<proteinExistence type="inferred from homology"/>
<sequence>MWFKNLLVYRLTQDVPFDAEALETALATKPARACASQEVATYGFVAPFGKGEDAPLVHISQDFMLIAARKEERILPGSVVRDALKEKVDEIEAEQMRKVYKKERDQLKDEIIQAFLPRAFIRRSATFAAIAPKQGLILVNASSPKRAEDLLSTLREVIGSLPVRPLTVKVSPSATMTDWVKTQKAADNFFVLDECELRDTHEDGGIVRCKRQDLTGDEIQLHLSTGKVVTQLSLAWQDKLSFVLDDKLVVKRLKFEDLLQDQAEQDGGDEALGQLDASFTLMMLTFGEFLPELFEALGGEEIPQGI</sequence>
<name>RDGC_PSEU2</name>
<organism>
    <name type="scientific">Pseudomonas syringae pv. syringae (strain B728a)</name>
    <dbReference type="NCBI Taxonomy" id="205918"/>
    <lineage>
        <taxon>Bacteria</taxon>
        <taxon>Pseudomonadati</taxon>
        <taxon>Pseudomonadota</taxon>
        <taxon>Gammaproteobacteria</taxon>
        <taxon>Pseudomonadales</taxon>
        <taxon>Pseudomonadaceae</taxon>
        <taxon>Pseudomonas</taxon>
        <taxon>Pseudomonas syringae</taxon>
    </lineage>
</organism>